<protein>
    <recommendedName>
        <fullName evidence="1">tRNA-dihydrouridine(16) synthase</fullName>
        <ecNumber evidence="1">1.3.1.-</ecNumber>
    </recommendedName>
    <alternativeName>
        <fullName evidence="1">U16-specific dihydrouridine synthase</fullName>
        <shortName evidence="1">U16-specific Dus</shortName>
    </alternativeName>
    <alternativeName>
        <fullName evidence="1">tRNA-dihydrouridine synthase C</fullName>
    </alternativeName>
</protein>
<dbReference type="EC" id="1.3.1.-" evidence="1"/>
<dbReference type="EMBL" id="AE016853">
    <property type="protein sequence ID" value="AAO55686.1"/>
    <property type="molecule type" value="Genomic_DNA"/>
</dbReference>
<dbReference type="RefSeq" id="NP_791991.1">
    <property type="nucleotide sequence ID" value="NC_004578.1"/>
</dbReference>
<dbReference type="RefSeq" id="WP_005769670.1">
    <property type="nucleotide sequence ID" value="NC_004578.1"/>
</dbReference>
<dbReference type="SMR" id="Q884C6"/>
<dbReference type="STRING" id="223283.PSPTO_2169"/>
<dbReference type="GeneID" id="1183820"/>
<dbReference type="KEGG" id="pst:PSPTO_2169"/>
<dbReference type="PATRIC" id="fig|223283.9.peg.2200"/>
<dbReference type="eggNOG" id="COG0042">
    <property type="taxonomic scope" value="Bacteria"/>
</dbReference>
<dbReference type="HOGENOM" id="CLU_013299_0_4_6"/>
<dbReference type="OrthoDB" id="5289281at2"/>
<dbReference type="PhylomeDB" id="Q884C6"/>
<dbReference type="Proteomes" id="UP000002515">
    <property type="component" value="Chromosome"/>
</dbReference>
<dbReference type="GO" id="GO:0050660">
    <property type="term" value="F:flavin adenine dinucleotide binding"/>
    <property type="evidence" value="ECO:0007669"/>
    <property type="project" value="InterPro"/>
</dbReference>
<dbReference type="GO" id="GO:0010181">
    <property type="term" value="F:FMN binding"/>
    <property type="evidence" value="ECO:0007669"/>
    <property type="project" value="UniProtKB-UniRule"/>
</dbReference>
<dbReference type="GO" id="GO:0000049">
    <property type="term" value="F:tRNA binding"/>
    <property type="evidence" value="ECO:0007669"/>
    <property type="project" value="UniProtKB-UniRule"/>
</dbReference>
<dbReference type="GO" id="GO:0102262">
    <property type="term" value="F:tRNA-dihydrouridine16 synthase activity"/>
    <property type="evidence" value="ECO:0007669"/>
    <property type="project" value="RHEA"/>
</dbReference>
<dbReference type="CDD" id="cd02801">
    <property type="entry name" value="DUS_like_FMN"/>
    <property type="match status" value="1"/>
</dbReference>
<dbReference type="Gene3D" id="3.20.20.70">
    <property type="entry name" value="Aldolase class I"/>
    <property type="match status" value="1"/>
</dbReference>
<dbReference type="Gene3D" id="1.20.225.30">
    <property type="entry name" value="Dihydrouridine synthase, C-terminal recognition domain"/>
    <property type="match status" value="1"/>
</dbReference>
<dbReference type="HAMAP" id="MF_02043">
    <property type="entry name" value="DusC_subfam"/>
    <property type="match status" value="1"/>
</dbReference>
<dbReference type="InterPro" id="IPR013785">
    <property type="entry name" value="Aldolase_TIM"/>
</dbReference>
<dbReference type="InterPro" id="IPR035587">
    <property type="entry name" value="DUS-like_FMN-bd"/>
</dbReference>
<dbReference type="InterPro" id="IPR001269">
    <property type="entry name" value="DUS_fam"/>
</dbReference>
<dbReference type="InterPro" id="IPR032886">
    <property type="entry name" value="DusC"/>
</dbReference>
<dbReference type="InterPro" id="IPR042270">
    <property type="entry name" value="DusC_C"/>
</dbReference>
<dbReference type="InterPro" id="IPR018517">
    <property type="entry name" value="tRNA_hU_synthase_CS"/>
</dbReference>
<dbReference type="PANTHER" id="PTHR11082">
    <property type="entry name" value="TRNA-DIHYDROURIDINE SYNTHASE"/>
    <property type="match status" value="1"/>
</dbReference>
<dbReference type="PANTHER" id="PTHR11082:SF26">
    <property type="entry name" value="TRNA-DIHYDROURIDINE(16) SYNTHASE"/>
    <property type="match status" value="1"/>
</dbReference>
<dbReference type="Pfam" id="PF01207">
    <property type="entry name" value="Dus"/>
    <property type="match status" value="1"/>
</dbReference>
<dbReference type="PIRSF" id="PIRSF006621">
    <property type="entry name" value="Dus"/>
    <property type="match status" value="1"/>
</dbReference>
<dbReference type="SUPFAM" id="SSF51395">
    <property type="entry name" value="FMN-linked oxidoreductases"/>
    <property type="match status" value="1"/>
</dbReference>
<dbReference type="PROSITE" id="PS01136">
    <property type="entry name" value="UPF0034"/>
    <property type="match status" value="1"/>
</dbReference>
<name>DUSC_PSESM</name>
<comment type="function">
    <text evidence="1">Catalyzes the synthesis of 5,6-dihydrouridine (D), a modified base found in the D-loop of most tRNAs, via the reduction of the C5-C6 double bond in target uridines. Specifically modifies U16 in tRNAs.</text>
</comment>
<comment type="catalytic activity">
    <reaction evidence="1">
        <text>5,6-dihydrouridine(16) in tRNA + NADP(+) = uridine(16) in tRNA + NADPH + H(+)</text>
        <dbReference type="Rhea" id="RHEA:53376"/>
        <dbReference type="Rhea" id="RHEA-COMP:13543"/>
        <dbReference type="Rhea" id="RHEA-COMP:13544"/>
        <dbReference type="ChEBI" id="CHEBI:15378"/>
        <dbReference type="ChEBI" id="CHEBI:57783"/>
        <dbReference type="ChEBI" id="CHEBI:58349"/>
        <dbReference type="ChEBI" id="CHEBI:65315"/>
        <dbReference type="ChEBI" id="CHEBI:74443"/>
    </reaction>
</comment>
<comment type="catalytic activity">
    <reaction evidence="1">
        <text>5,6-dihydrouridine(16) in tRNA + NAD(+) = uridine(16) in tRNA + NADH + H(+)</text>
        <dbReference type="Rhea" id="RHEA:53380"/>
        <dbReference type="Rhea" id="RHEA-COMP:13543"/>
        <dbReference type="Rhea" id="RHEA-COMP:13544"/>
        <dbReference type="ChEBI" id="CHEBI:15378"/>
        <dbReference type="ChEBI" id="CHEBI:57540"/>
        <dbReference type="ChEBI" id="CHEBI:57945"/>
        <dbReference type="ChEBI" id="CHEBI:65315"/>
        <dbReference type="ChEBI" id="CHEBI:74443"/>
    </reaction>
</comment>
<comment type="cofactor">
    <cofactor evidence="1">
        <name>FMN</name>
        <dbReference type="ChEBI" id="CHEBI:58210"/>
    </cofactor>
</comment>
<comment type="similarity">
    <text evidence="1">Belongs to the Dus family. DusC subfamily.</text>
</comment>
<feature type="chain" id="PRO_0000162120" description="tRNA-dihydrouridine(16) synthase">
    <location>
        <begin position="1"/>
        <end position="317"/>
    </location>
</feature>
<feature type="active site" description="Proton donor" evidence="1">
    <location>
        <position position="98"/>
    </location>
</feature>
<feature type="binding site" evidence="1">
    <location>
        <begin position="7"/>
        <end position="9"/>
    </location>
    <ligand>
        <name>FMN</name>
        <dbReference type="ChEBI" id="CHEBI:58210"/>
    </ligand>
</feature>
<feature type="binding site" evidence="1">
    <location>
        <position position="68"/>
    </location>
    <ligand>
        <name>FMN</name>
        <dbReference type="ChEBI" id="CHEBI:58210"/>
    </ligand>
</feature>
<feature type="binding site" evidence="1">
    <location>
        <position position="139"/>
    </location>
    <ligand>
        <name>FMN</name>
        <dbReference type="ChEBI" id="CHEBI:58210"/>
    </ligand>
</feature>
<feature type="binding site" evidence="1">
    <location>
        <begin position="199"/>
        <end position="201"/>
    </location>
    <ligand>
        <name>FMN</name>
        <dbReference type="ChEBI" id="CHEBI:58210"/>
    </ligand>
</feature>
<feature type="binding site" evidence="1">
    <location>
        <begin position="223"/>
        <end position="224"/>
    </location>
    <ligand>
        <name>FMN</name>
        <dbReference type="ChEBI" id="CHEBI:58210"/>
    </ligand>
</feature>
<feature type="site" description="Interacts with tRNA; defines subfamily-specific binding signature" evidence="1">
    <location>
        <position position="35"/>
    </location>
</feature>
<feature type="site" description="Interacts with tRNA" evidence="1">
    <location>
        <position position="95"/>
    </location>
</feature>
<feature type="site" description="Interacts with tRNA" evidence="1">
    <location>
        <position position="176"/>
    </location>
</feature>
<feature type="site" description="Interacts with tRNA; defines subfamily-specific binding signature" evidence="1">
    <location>
        <position position="276"/>
    </location>
</feature>
<feature type="site" description="Interacts with tRNA; defines subfamily-specific binding signature" evidence="1">
    <location>
        <position position="278"/>
    </location>
</feature>
<feature type="site" description="Interacts with tRNA; defines subfamily-specific binding signature" evidence="1">
    <location>
        <position position="299"/>
    </location>
</feature>
<accession>Q884C6</accession>
<sequence>MQIALAPMEGLVDDILRDALTKVGGIDWCVTEFIRVSERLMPAHYFYKYASEFHNGAKTDAGTPLRLQLLGSDPVCLAENAAFACELGAPVLDLNFGCPAKTVNRSRGGAILLKEPELLHTIVSQVRRAVPKDIPVTAKMRLGYENTDGALDCARALADGGAAQIVVHARTKVDGYKPPAHWEWIARIQEVVKVPVVANGEIWTVEDWRRCREICGARDIMIGRGLVARPDLARQIAAAQKGEEVVPMTWAELQPMLRTFWQACLVKMTLVQAPGRLKQWLVLLTKSYPEATLMFNTLRRETDCDRITVLLGCSTKS</sequence>
<keyword id="KW-0285">Flavoprotein</keyword>
<keyword id="KW-0288">FMN</keyword>
<keyword id="KW-0521">NADP</keyword>
<keyword id="KW-0560">Oxidoreductase</keyword>
<keyword id="KW-1185">Reference proteome</keyword>
<keyword id="KW-0694">RNA-binding</keyword>
<keyword id="KW-0819">tRNA processing</keyword>
<keyword id="KW-0820">tRNA-binding</keyword>
<organism>
    <name type="scientific">Pseudomonas syringae pv. tomato (strain ATCC BAA-871 / DC3000)</name>
    <dbReference type="NCBI Taxonomy" id="223283"/>
    <lineage>
        <taxon>Bacteria</taxon>
        <taxon>Pseudomonadati</taxon>
        <taxon>Pseudomonadota</taxon>
        <taxon>Gammaproteobacteria</taxon>
        <taxon>Pseudomonadales</taxon>
        <taxon>Pseudomonadaceae</taxon>
        <taxon>Pseudomonas</taxon>
    </lineage>
</organism>
<proteinExistence type="inferred from homology"/>
<evidence type="ECO:0000255" key="1">
    <source>
        <dbReference type="HAMAP-Rule" id="MF_02043"/>
    </source>
</evidence>
<reference key="1">
    <citation type="journal article" date="2003" name="Proc. Natl. Acad. Sci. U.S.A.">
        <title>The complete genome sequence of the Arabidopsis and tomato pathogen Pseudomonas syringae pv. tomato DC3000.</title>
        <authorList>
            <person name="Buell C.R."/>
            <person name="Joardar V."/>
            <person name="Lindeberg M."/>
            <person name="Selengut J."/>
            <person name="Paulsen I.T."/>
            <person name="Gwinn M.L."/>
            <person name="Dodson R.J."/>
            <person name="DeBoy R.T."/>
            <person name="Durkin A.S."/>
            <person name="Kolonay J.F."/>
            <person name="Madupu R."/>
            <person name="Daugherty S.C."/>
            <person name="Brinkac L.M."/>
            <person name="Beanan M.J."/>
            <person name="Haft D.H."/>
            <person name="Nelson W.C."/>
            <person name="Davidsen T.M."/>
            <person name="Zafar N."/>
            <person name="Zhou L."/>
            <person name="Liu J."/>
            <person name="Yuan Q."/>
            <person name="Khouri H.M."/>
            <person name="Fedorova N.B."/>
            <person name="Tran B."/>
            <person name="Russell D."/>
            <person name="Berry K.J."/>
            <person name="Utterback T.R."/>
            <person name="Van Aken S.E."/>
            <person name="Feldblyum T.V."/>
            <person name="D'Ascenzo M."/>
            <person name="Deng W.-L."/>
            <person name="Ramos A.R."/>
            <person name="Alfano J.R."/>
            <person name="Cartinhour S."/>
            <person name="Chatterjee A.K."/>
            <person name="Delaney T.P."/>
            <person name="Lazarowitz S.G."/>
            <person name="Martin G.B."/>
            <person name="Schneider D.J."/>
            <person name="Tang X."/>
            <person name="Bender C.L."/>
            <person name="White O."/>
            <person name="Fraser C.M."/>
            <person name="Collmer A."/>
        </authorList>
    </citation>
    <scope>NUCLEOTIDE SEQUENCE [LARGE SCALE GENOMIC DNA]</scope>
    <source>
        <strain>ATCC BAA-871 / DC3000</strain>
    </source>
</reference>
<gene>
    <name evidence="1" type="primary">dusC</name>
    <name type="ordered locus">PSPTO_2169</name>
</gene>